<sequence>MERIMSTVSVVNTNNEKVDEIELNDAIFNREVKEYILHDVVRMQRAAKRAGTASTKTRVEVRGGGAKPWRQKGTGRARAGSRTSPLWRGGGVTFGPKPRDYSFKLNRKVRQQAVSMALSARFQEGNLIVLDNFIMDAIKTKEFASTMKTLELANALIVMDDASENLSKSCRNVHGYRILPAEGLNVYDILLHKKVVLVKPVIESLEKRLMV</sequence>
<accession>Q6AP70</accession>
<gene>
    <name evidence="1" type="primary">rplD</name>
    <name type="ordered locus">DP1125</name>
</gene>
<organism>
    <name type="scientific">Desulfotalea psychrophila (strain LSv54 / DSM 12343)</name>
    <dbReference type="NCBI Taxonomy" id="177439"/>
    <lineage>
        <taxon>Bacteria</taxon>
        <taxon>Pseudomonadati</taxon>
        <taxon>Thermodesulfobacteriota</taxon>
        <taxon>Desulfobulbia</taxon>
        <taxon>Desulfobulbales</taxon>
        <taxon>Desulfocapsaceae</taxon>
        <taxon>Desulfotalea</taxon>
    </lineage>
</organism>
<reference key="1">
    <citation type="journal article" date="2004" name="Environ. Microbiol.">
        <title>The genome of Desulfotalea psychrophila, a sulfate-reducing bacterium from permanently cold Arctic sediments.</title>
        <authorList>
            <person name="Rabus R."/>
            <person name="Ruepp A."/>
            <person name="Frickey T."/>
            <person name="Rattei T."/>
            <person name="Fartmann B."/>
            <person name="Stark M."/>
            <person name="Bauer M."/>
            <person name="Zibat A."/>
            <person name="Lombardot T."/>
            <person name="Becker I."/>
            <person name="Amann J."/>
            <person name="Gellner K."/>
            <person name="Teeling H."/>
            <person name="Leuschner W.D."/>
            <person name="Gloeckner F.-O."/>
            <person name="Lupas A.N."/>
            <person name="Amann R."/>
            <person name="Klenk H.-P."/>
        </authorList>
    </citation>
    <scope>NUCLEOTIDE SEQUENCE [LARGE SCALE GENOMIC DNA]</scope>
    <source>
        <strain>DSM 12343 / LSv54</strain>
    </source>
</reference>
<evidence type="ECO:0000255" key="1">
    <source>
        <dbReference type="HAMAP-Rule" id="MF_01328"/>
    </source>
</evidence>
<evidence type="ECO:0000256" key="2">
    <source>
        <dbReference type="SAM" id="MobiDB-lite"/>
    </source>
</evidence>
<evidence type="ECO:0000305" key="3"/>
<name>RL4_DESPS</name>
<comment type="function">
    <text evidence="1">One of the primary rRNA binding proteins, this protein initially binds near the 5'-end of the 23S rRNA. It is important during the early stages of 50S assembly. It makes multiple contacts with different domains of the 23S rRNA in the assembled 50S subunit and ribosome.</text>
</comment>
<comment type="function">
    <text evidence="1">Forms part of the polypeptide exit tunnel.</text>
</comment>
<comment type="subunit">
    <text evidence="1">Part of the 50S ribosomal subunit.</text>
</comment>
<comment type="similarity">
    <text evidence="1">Belongs to the universal ribosomal protein uL4 family.</text>
</comment>
<keyword id="KW-1185">Reference proteome</keyword>
<keyword id="KW-0687">Ribonucleoprotein</keyword>
<keyword id="KW-0689">Ribosomal protein</keyword>
<keyword id="KW-0694">RNA-binding</keyword>
<keyword id="KW-0699">rRNA-binding</keyword>
<feature type="chain" id="PRO_0000242367" description="Large ribosomal subunit protein uL4">
    <location>
        <begin position="1"/>
        <end position="211"/>
    </location>
</feature>
<feature type="region of interest" description="Disordered" evidence="2">
    <location>
        <begin position="48"/>
        <end position="89"/>
    </location>
</feature>
<dbReference type="EMBL" id="CR522870">
    <property type="protein sequence ID" value="CAG35854.1"/>
    <property type="molecule type" value="Genomic_DNA"/>
</dbReference>
<dbReference type="SMR" id="Q6AP70"/>
<dbReference type="STRING" id="177439.DP1125"/>
<dbReference type="KEGG" id="dps:DP1125"/>
<dbReference type="eggNOG" id="COG0088">
    <property type="taxonomic scope" value="Bacteria"/>
</dbReference>
<dbReference type="HOGENOM" id="CLU_041575_5_2_7"/>
<dbReference type="Proteomes" id="UP000000602">
    <property type="component" value="Chromosome"/>
</dbReference>
<dbReference type="GO" id="GO:1990904">
    <property type="term" value="C:ribonucleoprotein complex"/>
    <property type="evidence" value="ECO:0007669"/>
    <property type="project" value="UniProtKB-KW"/>
</dbReference>
<dbReference type="GO" id="GO:0005840">
    <property type="term" value="C:ribosome"/>
    <property type="evidence" value="ECO:0007669"/>
    <property type="project" value="UniProtKB-KW"/>
</dbReference>
<dbReference type="GO" id="GO:0019843">
    <property type="term" value="F:rRNA binding"/>
    <property type="evidence" value="ECO:0007669"/>
    <property type="project" value="UniProtKB-UniRule"/>
</dbReference>
<dbReference type="GO" id="GO:0003735">
    <property type="term" value="F:structural constituent of ribosome"/>
    <property type="evidence" value="ECO:0007669"/>
    <property type="project" value="InterPro"/>
</dbReference>
<dbReference type="GO" id="GO:0006412">
    <property type="term" value="P:translation"/>
    <property type="evidence" value="ECO:0007669"/>
    <property type="project" value="UniProtKB-UniRule"/>
</dbReference>
<dbReference type="Gene3D" id="3.40.1370.10">
    <property type="match status" value="1"/>
</dbReference>
<dbReference type="HAMAP" id="MF_01328_B">
    <property type="entry name" value="Ribosomal_uL4_B"/>
    <property type="match status" value="1"/>
</dbReference>
<dbReference type="InterPro" id="IPR002136">
    <property type="entry name" value="Ribosomal_uL4"/>
</dbReference>
<dbReference type="InterPro" id="IPR013005">
    <property type="entry name" value="Ribosomal_uL4-like"/>
</dbReference>
<dbReference type="InterPro" id="IPR023574">
    <property type="entry name" value="Ribosomal_uL4_dom_sf"/>
</dbReference>
<dbReference type="NCBIfam" id="TIGR03953">
    <property type="entry name" value="rplD_bact"/>
    <property type="match status" value="1"/>
</dbReference>
<dbReference type="PANTHER" id="PTHR10746">
    <property type="entry name" value="50S RIBOSOMAL PROTEIN L4"/>
    <property type="match status" value="1"/>
</dbReference>
<dbReference type="PANTHER" id="PTHR10746:SF6">
    <property type="entry name" value="LARGE RIBOSOMAL SUBUNIT PROTEIN UL4M"/>
    <property type="match status" value="1"/>
</dbReference>
<dbReference type="Pfam" id="PF00573">
    <property type="entry name" value="Ribosomal_L4"/>
    <property type="match status" value="1"/>
</dbReference>
<dbReference type="SUPFAM" id="SSF52166">
    <property type="entry name" value="Ribosomal protein L4"/>
    <property type="match status" value="1"/>
</dbReference>
<protein>
    <recommendedName>
        <fullName evidence="1">Large ribosomal subunit protein uL4</fullName>
    </recommendedName>
    <alternativeName>
        <fullName evidence="3">50S ribosomal protein L4</fullName>
    </alternativeName>
</protein>
<proteinExistence type="inferred from homology"/>